<accession>Q2RYT3</accession>
<dbReference type="EC" id="6.1.1.20" evidence="1"/>
<dbReference type="EMBL" id="CP000159">
    <property type="protein sequence ID" value="ABC44769.1"/>
    <property type="molecule type" value="Genomic_DNA"/>
</dbReference>
<dbReference type="RefSeq" id="WP_011405510.1">
    <property type="nucleotide sequence ID" value="NC_007677.1"/>
</dbReference>
<dbReference type="RefSeq" id="YP_446898.1">
    <property type="nucleotide sequence ID" value="NC_007677.1"/>
</dbReference>
<dbReference type="SMR" id="Q2RYT3"/>
<dbReference type="STRING" id="309807.SRU_2807"/>
<dbReference type="EnsemblBacteria" id="ABC44769">
    <property type="protein sequence ID" value="ABC44769"/>
    <property type="gene ID" value="SRU_2807"/>
</dbReference>
<dbReference type="KEGG" id="sru:SRU_2807"/>
<dbReference type="PATRIC" id="fig|309807.25.peg.2927"/>
<dbReference type="eggNOG" id="COG0072">
    <property type="taxonomic scope" value="Bacteria"/>
</dbReference>
<dbReference type="eggNOG" id="COG0073">
    <property type="taxonomic scope" value="Bacteria"/>
</dbReference>
<dbReference type="HOGENOM" id="CLU_016891_0_0_10"/>
<dbReference type="OrthoDB" id="9805455at2"/>
<dbReference type="Proteomes" id="UP000008674">
    <property type="component" value="Chromosome"/>
</dbReference>
<dbReference type="GO" id="GO:0009328">
    <property type="term" value="C:phenylalanine-tRNA ligase complex"/>
    <property type="evidence" value="ECO:0007669"/>
    <property type="project" value="TreeGrafter"/>
</dbReference>
<dbReference type="GO" id="GO:0005524">
    <property type="term" value="F:ATP binding"/>
    <property type="evidence" value="ECO:0007669"/>
    <property type="project" value="UniProtKB-UniRule"/>
</dbReference>
<dbReference type="GO" id="GO:0000287">
    <property type="term" value="F:magnesium ion binding"/>
    <property type="evidence" value="ECO:0007669"/>
    <property type="project" value="UniProtKB-UniRule"/>
</dbReference>
<dbReference type="GO" id="GO:0004826">
    <property type="term" value="F:phenylalanine-tRNA ligase activity"/>
    <property type="evidence" value="ECO:0007669"/>
    <property type="project" value="UniProtKB-UniRule"/>
</dbReference>
<dbReference type="GO" id="GO:0000049">
    <property type="term" value="F:tRNA binding"/>
    <property type="evidence" value="ECO:0007669"/>
    <property type="project" value="UniProtKB-KW"/>
</dbReference>
<dbReference type="GO" id="GO:0006432">
    <property type="term" value="P:phenylalanyl-tRNA aminoacylation"/>
    <property type="evidence" value="ECO:0007669"/>
    <property type="project" value="UniProtKB-UniRule"/>
</dbReference>
<dbReference type="CDD" id="cd00769">
    <property type="entry name" value="PheRS_beta_core"/>
    <property type="match status" value="1"/>
</dbReference>
<dbReference type="CDD" id="cd02796">
    <property type="entry name" value="tRNA_bind_bactPheRS"/>
    <property type="match status" value="1"/>
</dbReference>
<dbReference type="FunFam" id="2.40.50.140:FF:000045">
    <property type="entry name" value="Phenylalanine--tRNA ligase beta subunit"/>
    <property type="match status" value="1"/>
</dbReference>
<dbReference type="FunFam" id="3.30.56.10:FF:000002">
    <property type="entry name" value="Phenylalanine--tRNA ligase beta subunit"/>
    <property type="match status" value="1"/>
</dbReference>
<dbReference type="FunFam" id="3.30.70.380:FF:000001">
    <property type="entry name" value="Phenylalanine--tRNA ligase beta subunit"/>
    <property type="match status" value="1"/>
</dbReference>
<dbReference type="FunFam" id="3.50.40.10:FF:000001">
    <property type="entry name" value="Phenylalanine--tRNA ligase beta subunit"/>
    <property type="match status" value="1"/>
</dbReference>
<dbReference type="Gene3D" id="3.30.56.10">
    <property type="match status" value="2"/>
</dbReference>
<dbReference type="Gene3D" id="3.30.930.10">
    <property type="entry name" value="Bira Bifunctional Protein, Domain 2"/>
    <property type="match status" value="1"/>
</dbReference>
<dbReference type="Gene3D" id="3.30.70.380">
    <property type="entry name" value="Ferrodoxin-fold anticodon-binding domain"/>
    <property type="match status" value="1"/>
</dbReference>
<dbReference type="Gene3D" id="2.40.50.140">
    <property type="entry name" value="Nucleic acid-binding proteins"/>
    <property type="match status" value="1"/>
</dbReference>
<dbReference type="Gene3D" id="3.50.40.10">
    <property type="entry name" value="Phenylalanyl-trna Synthetase, Chain B, domain 3"/>
    <property type="match status" value="1"/>
</dbReference>
<dbReference type="HAMAP" id="MF_00283">
    <property type="entry name" value="Phe_tRNA_synth_beta1"/>
    <property type="match status" value="1"/>
</dbReference>
<dbReference type="InterPro" id="IPR045864">
    <property type="entry name" value="aa-tRNA-synth_II/BPL/LPL"/>
</dbReference>
<dbReference type="InterPro" id="IPR005146">
    <property type="entry name" value="B3/B4_tRNA-bd"/>
</dbReference>
<dbReference type="InterPro" id="IPR009061">
    <property type="entry name" value="DNA-bd_dom_put_sf"/>
</dbReference>
<dbReference type="InterPro" id="IPR005121">
    <property type="entry name" value="Fdx_antiC-bd"/>
</dbReference>
<dbReference type="InterPro" id="IPR036690">
    <property type="entry name" value="Fdx_antiC-bd_sf"/>
</dbReference>
<dbReference type="InterPro" id="IPR012340">
    <property type="entry name" value="NA-bd_OB-fold"/>
</dbReference>
<dbReference type="InterPro" id="IPR045060">
    <property type="entry name" value="Phe-tRNA-ligase_IIc_bsu"/>
</dbReference>
<dbReference type="InterPro" id="IPR004532">
    <property type="entry name" value="Phe-tRNA-ligase_IIc_bsu_bact"/>
</dbReference>
<dbReference type="InterPro" id="IPR020825">
    <property type="entry name" value="Phe-tRNA_synthase-like_B3/B4"/>
</dbReference>
<dbReference type="InterPro" id="IPR041616">
    <property type="entry name" value="PheRS_beta_core"/>
</dbReference>
<dbReference type="InterPro" id="IPR002547">
    <property type="entry name" value="tRNA-bd_dom"/>
</dbReference>
<dbReference type="InterPro" id="IPR033714">
    <property type="entry name" value="tRNA_bind_bactPheRS"/>
</dbReference>
<dbReference type="InterPro" id="IPR005147">
    <property type="entry name" value="tRNA_synthase_B5-dom"/>
</dbReference>
<dbReference type="NCBIfam" id="TIGR00472">
    <property type="entry name" value="pheT_bact"/>
    <property type="match status" value="1"/>
</dbReference>
<dbReference type="PANTHER" id="PTHR10947:SF0">
    <property type="entry name" value="PHENYLALANINE--TRNA LIGASE BETA SUBUNIT"/>
    <property type="match status" value="1"/>
</dbReference>
<dbReference type="PANTHER" id="PTHR10947">
    <property type="entry name" value="PHENYLALANYL-TRNA SYNTHETASE BETA CHAIN AND LEUCINE-RICH REPEAT-CONTAINING PROTEIN 47"/>
    <property type="match status" value="1"/>
</dbReference>
<dbReference type="Pfam" id="PF03483">
    <property type="entry name" value="B3_4"/>
    <property type="match status" value="1"/>
</dbReference>
<dbReference type="Pfam" id="PF03484">
    <property type="entry name" value="B5"/>
    <property type="match status" value="1"/>
</dbReference>
<dbReference type="Pfam" id="PF03147">
    <property type="entry name" value="FDX-ACB"/>
    <property type="match status" value="1"/>
</dbReference>
<dbReference type="Pfam" id="PF01588">
    <property type="entry name" value="tRNA_bind"/>
    <property type="match status" value="1"/>
</dbReference>
<dbReference type="Pfam" id="PF17759">
    <property type="entry name" value="tRNA_synthFbeta"/>
    <property type="match status" value="1"/>
</dbReference>
<dbReference type="SMART" id="SM00873">
    <property type="entry name" value="B3_4"/>
    <property type="match status" value="1"/>
</dbReference>
<dbReference type="SMART" id="SM00874">
    <property type="entry name" value="B5"/>
    <property type="match status" value="1"/>
</dbReference>
<dbReference type="SMART" id="SM00896">
    <property type="entry name" value="FDX-ACB"/>
    <property type="match status" value="1"/>
</dbReference>
<dbReference type="SUPFAM" id="SSF54991">
    <property type="entry name" value="Anticodon-binding domain of PheRS"/>
    <property type="match status" value="1"/>
</dbReference>
<dbReference type="SUPFAM" id="SSF55681">
    <property type="entry name" value="Class II aaRS and biotin synthetases"/>
    <property type="match status" value="1"/>
</dbReference>
<dbReference type="SUPFAM" id="SSF50249">
    <property type="entry name" value="Nucleic acid-binding proteins"/>
    <property type="match status" value="1"/>
</dbReference>
<dbReference type="SUPFAM" id="SSF56037">
    <property type="entry name" value="PheT/TilS domain"/>
    <property type="match status" value="1"/>
</dbReference>
<dbReference type="SUPFAM" id="SSF46955">
    <property type="entry name" value="Putative DNA-binding domain"/>
    <property type="match status" value="1"/>
</dbReference>
<dbReference type="PROSITE" id="PS51483">
    <property type="entry name" value="B5"/>
    <property type="match status" value="1"/>
</dbReference>
<dbReference type="PROSITE" id="PS51447">
    <property type="entry name" value="FDX_ACB"/>
    <property type="match status" value="1"/>
</dbReference>
<dbReference type="PROSITE" id="PS50886">
    <property type="entry name" value="TRBD"/>
    <property type="match status" value="1"/>
</dbReference>
<reference key="1">
    <citation type="journal article" date="2005" name="Proc. Natl. Acad. Sci. U.S.A.">
        <title>The genome of Salinibacter ruber: convergence and gene exchange among hyperhalophilic bacteria and archaea.</title>
        <authorList>
            <person name="Mongodin E.F."/>
            <person name="Nelson K.E."/>
            <person name="Daugherty S."/>
            <person name="DeBoy R.T."/>
            <person name="Wister J."/>
            <person name="Khouri H."/>
            <person name="Weidman J."/>
            <person name="Walsh D.A."/>
            <person name="Papke R.T."/>
            <person name="Sanchez Perez G."/>
            <person name="Sharma A.K."/>
            <person name="Nesbo C.L."/>
            <person name="MacLeod D."/>
            <person name="Bapteste E."/>
            <person name="Doolittle W.F."/>
            <person name="Charlebois R.L."/>
            <person name="Legault B."/>
            <person name="Rodriguez-Valera F."/>
        </authorList>
    </citation>
    <scope>NUCLEOTIDE SEQUENCE [LARGE SCALE GENOMIC DNA]</scope>
    <source>
        <strain>DSM 13855 / CECT 5946 / M31</strain>
    </source>
</reference>
<protein>
    <recommendedName>
        <fullName evidence="1">Phenylalanine--tRNA ligase beta subunit</fullName>
        <ecNumber evidence="1">6.1.1.20</ecNumber>
    </recommendedName>
    <alternativeName>
        <fullName evidence="1">Phenylalanyl-tRNA synthetase beta subunit</fullName>
        <shortName evidence="1">PheRS</shortName>
    </alternativeName>
</protein>
<evidence type="ECO:0000255" key="1">
    <source>
        <dbReference type="HAMAP-Rule" id="MF_00283"/>
    </source>
</evidence>
<evidence type="ECO:0000256" key="2">
    <source>
        <dbReference type="SAM" id="MobiDB-lite"/>
    </source>
</evidence>
<keyword id="KW-0030">Aminoacyl-tRNA synthetase</keyword>
<keyword id="KW-0067">ATP-binding</keyword>
<keyword id="KW-0963">Cytoplasm</keyword>
<keyword id="KW-0436">Ligase</keyword>
<keyword id="KW-0460">Magnesium</keyword>
<keyword id="KW-0479">Metal-binding</keyword>
<keyword id="KW-0547">Nucleotide-binding</keyword>
<keyword id="KW-0648">Protein biosynthesis</keyword>
<keyword id="KW-1185">Reference proteome</keyword>
<keyword id="KW-0694">RNA-binding</keyword>
<keyword id="KW-0820">tRNA-binding</keyword>
<feature type="chain" id="PRO_0000232819" description="Phenylalanine--tRNA ligase beta subunit">
    <location>
        <begin position="1"/>
        <end position="830"/>
    </location>
</feature>
<feature type="domain" description="tRNA-binding" evidence="1">
    <location>
        <begin position="39"/>
        <end position="158"/>
    </location>
</feature>
<feature type="domain" description="B5" evidence="1">
    <location>
        <begin position="417"/>
        <end position="492"/>
    </location>
</feature>
<feature type="domain" description="FDX-ACB" evidence="1">
    <location>
        <begin position="736"/>
        <end position="828"/>
    </location>
</feature>
<feature type="region of interest" description="Disordered" evidence="2">
    <location>
        <begin position="490"/>
        <end position="510"/>
    </location>
</feature>
<feature type="binding site" evidence="1">
    <location>
        <position position="470"/>
    </location>
    <ligand>
        <name>Mg(2+)</name>
        <dbReference type="ChEBI" id="CHEBI:18420"/>
        <note>shared with alpha subunit</note>
    </ligand>
</feature>
<feature type="binding site" evidence="1">
    <location>
        <position position="476"/>
    </location>
    <ligand>
        <name>Mg(2+)</name>
        <dbReference type="ChEBI" id="CHEBI:18420"/>
        <note>shared with alpha subunit</note>
    </ligand>
</feature>
<feature type="binding site" evidence="1">
    <location>
        <position position="479"/>
    </location>
    <ligand>
        <name>Mg(2+)</name>
        <dbReference type="ChEBI" id="CHEBI:18420"/>
        <note>shared with alpha subunit</note>
    </ligand>
</feature>
<feature type="binding site" evidence="1">
    <location>
        <position position="480"/>
    </location>
    <ligand>
        <name>Mg(2+)</name>
        <dbReference type="ChEBI" id="CHEBI:18420"/>
        <note>shared with alpha subunit</note>
    </ligand>
</feature>
<sequence>MDVSYNWLNEYVDHDWSPKELAERLTMAGLEVETVRPLGQSLDGVVVGKVTAVREHPNADRLVLCDVDLGDGAPSQIACGAPNVAAGQKVPVATVGTTLSRPDPDDPEALQELTVEARELRGEASNGMICAEDELGLSDDHAGIMVLDDDTPVGTPFPEYLDAHGMPSTDAVLDIELTPNRPDAASHLGVARDVSALADSELRTPTVDTPSPGGPVAEEITVDLRDEAGCPRYVALLVRGVDVTESPLWLRRRLTAIGLQPRNHVVDVTNFVLHECGQPLHAFDLDAIADDTIVVRRTDDETPFTTLDGEERDLPEDTLLICDAEAPVAVAGVMGGANSEVSADTTDVLIESAYFDPSTIRRTAKALDLQTDSSYRFERGVDRDGQVWAAARAAELIAKLGGGTVVPGLVDEHPSPPAEKTIALRPDRLTQVLGTEVPTDEGTRLLGAIGFDVEAGEDALHCTVPTWRPDVSIEEDLIEEVARLHGYDQIPEPERVPVPSRTPEQPPEETLERQARQLLKGLGYREIYTNSMLRTDRAERFNVPPAGSDRAPVVETKNPISEEMAALRPRLLPGALEVMQHNRNHGQEALRVFEFGRVFRRAAEPDDPIVPGYSEHPALLVALSGPHAPTGWDTEPRSADIFDLKGTVETLLDDLRVPALQVRPRDAGATDEAPPVTQHHIDVAAGDTPLGTVARVRDDVAADFDLDTPVFVAEFHWAALVDSATAEQHRDYEPVSRFPVVDRDLAVLVPADQPVGPLQRAIREAGAPLLRRVDVFDTYAGEGIDEDTKSVAFTLRFGADRTLTDEEVDARLDAIVERLAENHGARLRQQ</sequence>
<name>SYFB_SALRD</name>
<organism>
    <name type="scientific">Salinibacter ruber (strain DSM 13855 / M31)</name>
    <dbReference type="NCBI Taxonomy" id="309807"/>
    <lineage>
        <taxon>Bacteria</taxon>
        <taxon>Pseudomonadati</taxon>
        <taxon>Rhodothermota</taxon>
        <taxon>Rhodothermia</taxon>
        <taxon>Rhodothermales</taxon>
        <taxon>Salinibacteraceae</taxon>
        <taxon>Salinibacter</taxon>
    </lineage>
</organism>
<proteinExistence type="inferred from homology"/>
<comment type="catalytic activity">
    <reaction evidence="1">
        <text>tRNA(Phe) + L-phenylalanine + ATP = L-phenylalanyl-tRNA(Phe) + AMP + diphosphate + H(+)</text>
        <dbReference type="Rhea" id="RHEA:19413"/>
        <dbReference type="Rhea" id="RHEA-COMP:9668"/>
        <dbReference type="Rhea" id="RHEA-COMP:9699"/>
        <dbReference type="ChEBI" id="CHEBI:15378"/>
        <dbReference type="ChEBI" id="CHEBI:30616"/>
        <dbReference type="ChEBI" id="CHEBI:33019"/>
        <dbReference type="ChEBI" id="CHEBI:58095"/>
        <dbReference type="ChEBI" id="CHEBI:78442"/>
        <dbReference type="ChEBI" id="CHEBI:78531"/>
        <dbReference type="ChEBI" id="CHEBI:456215"/>
        <dbReference type="EC" id="6.1.1.20"/>
    </reaction>
</comment>
<comment type="cofactor">
    <cofactor evidence="1">
        <name>Mg(2+)</name>
        <dbReference type="ChEBI" id="CHEBI:18420"/>
    </cofactor>
    <text evidence="1">Binds 2 magnesium ions per tetramer.</text>
</comment>
<comment type="subunit">
    <text evidence="1">Tetramer of two alpha and two beta subunits.</text>
</comment>
<comment type="subcellular location">
    <subcellularLocation>
        <location evidence="1">Cytoplasm</location>
    </subcellularLocation>
</comment>
<comment type="similarity">
    <text evidence="1">Belongs to the phenylalanyl-tRNA synthetase beta subunit family. Type 1 subfamily.</text>
</comment>
<gene>
    <name evidence="1" type="primary">pheT</name>
    <name type="ordered locus">SRU_2807</name>
</gene>